<protein>
    <recommendedName>
        <fullName evidence="1">NADH-quinone oxidoreductase subunit H</fullName>
        <ecNumber evidence="1">7.1.1.-</ecNumber>
    </recommendedName>
    <alternativeName>
        <fullName evidence="1">NADH dehydrogenase I subunit H</fullName>
    </alternativeName>
    <alternativeName>
        <fullName evidence="1">NDH-1 subunit H</fullName>
    </alternativeName>
</protein>
<organism>
    <name type="scientific">Rickettsia conorii (strain ATCC VR-613 / Malish 7)</name>
    <dbReference type="NCBI Taxonomy" id="272944"/>
    <lineage>
        <taxon>Bacteria</taxon>
        <taxon>Pseudomonadati</taxon>
        <taxon>Pseudomonadota</taxon>
        <taxon>Alphaproteobacteria</taxon>
        <taxon>Rickettsiales</taxon>
        <taxon>Rickettsiaceae</taxon>
        <taxon>Rickettsieae</taxon>
        <taxon>Rickettsia</taxon>
        <taxon>spotted fever group</taxon>
    </lineage>
</organism>
<name>NUOH_RICCN</name>
<gene>
    <name evidence="1" type="primary">nuoH</name>
    <name type="ordered locus">RC1230</name>
</gene>
<evidence type="ECO:0000255" key="1">
    <source>
        <dbReference type="HAMAP-Rule" id="MF_01350"/>
    </source>
</evidence>
<reference key="1">
    <citation type="journal article" date="2001" name="Science">
        <title>Mechanisms of evolution in Rickettsia conorii and R. prowazekii.</title>
        <authorList>
            <person name="Ogata H."/>
            <person name="Audic S."/>
            <person name="Renesto-Audiffren P."/>
            <person name="Fournier P.-E."/>
            <person name="Barbe V."/>
            <person name="Samson D."/>
            <person name="Roux V."/>
            <person name="Cossart P."/>
            <person name="Weissenbach J."/>
            <person name="Claverie J.-M."/>
            <person name="Raoult D."/>
        </authorList>
    </citation>
    <scope>NUCLEOTIDE SEQUENCE [LARGE SCALE GENOMIC DNA]</scope>
    <source>
        <strain>ATCC VR-613 / Malish 7</strain>
    </source>
</reference>
<accession>Q92G93</accession>
<feature type="chain" id="PRO_0000117532" description="NADH-quinone oxidoreductase subunit H">
    <location>
        <begin position="1"/>
        <end position="339"/>
    </location>
</feature>
<feature type="transmembrane region" description="Helical" evidence="1">
    <location>
        <begin position="9"/>
        <end position="29"/>
    </location>
</feature>
<feature type="transmembrane region" description="Helical" evidence="1">
    <location>
        <begin position="50"/>
        <end position="70"/>
    </location>
</feature>
<feature type="transmembrane region" description="Helical" evidence="1">
    <location>
        <begin position="82"/>
        <end position="102"/>
    </location>
</feature>
<feature type="transmembrane region" description="Helical" evidence="1">
    <location>
        <begin position="115"/>
        <end position="135"/>
    </location>
</feature>
<feature type="transmembrane region" description="Helical" evidence="1">
    <location>
        <begin position="161"/>
        <end position="181"/>
    </location>
</feature>
<feature type="transmembrane region" description="Helical" evidence="1">
    <location>
        <begin position="187"/>
        <end position="207"/>
    </location>
</feature>
<feature type="transmembrane region" description="Helical" evidence="1">
    <location>
        <begin position="235"/>
        <end position="255"/>
    </location>
</feature>
<feature type="transmembrane region" description="Helical" evidence="1">
    <location>
        <begin position="275"/>
        <end position="295"/>
    </location>
</feature>
<feature type="transmembrane region" description="Helical" evidence="1">
    <location>
        <begin position="311"/>
        <end position="331"/>
    </location>
</feature>
<sequence>MLELFFEYIFPLIIIALKVVAITIPLILCVAYLTYAERRVIGLMQLRRGPNVVGPFGLLQPIADAVKLLFKEPIIPTNSDKILFILAPMITFILSLIGWAVIPFAKGVVLADINVGVLYILAISSLSVYGIIIAGWASNSKYAFLGAIRSSAQMISYEMSMGLVIITVLLTNGTLNLSGIIEAQRTMPWWIDLMLLPMGVVFFISVLAETNRLPFDLPEAESELVAGYNVEYSSMGFALFFLGEYANMILVSAMTTTFFLGGYLPPFNISWLDCIPGFFWFVFKVGFLLFCFLWIRATLPRYRYDQLMRLGWKVFLPLTLFWVVLVSSVLVYTDNLPSI</sequence>
<comment type="function">
    <text evidence="1">NDH-1 shuttles electrons from NADH, via FMN and iron-sulfur (Fe-S) centers, to quinones in the respiratory chain. The immediate electron acceptor for the enzyme in this species is believed to be ubiquinone. Couples the redox reaction to proton translocation (for every two electrons transferred, four hydrogen ions are translocated across the cytoplasmic membrane), and thus conserves the redox energy in a proton gradient. This subunit may bind ubiquinone.</text>
</comment>
<comment type="catalytic activity">
    <reaction evidence="1">
        <text>a quinone + NADH + 5 H(+)(in) = a quinol + NAD(+) + 4 H(+)(out)</text>
        <dbReference type="Rhea" id="RHEA:57888"/>
        <dbReference type="ChEBI" id="CHEBI:15378"/>
        <dbReference type="ChEBI" id="CHEBI:24646"/>
        <dbReference type="ChEBI" id="CHEBI:57540"/>
        <dbReference type="ChEBI" id="CHEBI:57945"/>
        <dbReference type="ChEBI" id="CHEBI:132124"/>
    </reaction>
</comment>
<comment type="subunit">
    <text evidence="1">NDH-1 is composed of 14 different subunits. Subunits NuoA, H, J, K, L, M, N constitute the membrane sector of the complex.</text>
</comment>
<comment type="subcellular location">
    <subcellularLocation>
        <location evidence="1">Cell inner membrane</location>
        <topology evidence="1">Multi-pass membrane protein</topology>
    </subcellularLocation>
</comment>
<comment type="similarity">
    <text evidence="1">Belongs to the complex I subunit 1 family.</text>
</comment>
<dbReference type="EC" id="7.1.1.-" evidence="1"/>
<dbReference type="EMBL" id="AE006914">
    <property type="protein sequence ID" value="AAL03768.1"/>
    <property type="molecule type" value="Genomic_DNA"/>
</dbReference>
<dbReference type="PIR" id="F97853">
    <property type="entry name" value="F97853"/>
</dbReference>
<dbReference type="RefSeq" id="WP_010977795.1">
    <property type="nucleotide sequence ID" value="NC_003103.1"/>
</dbReference>
<dbReference type="SMR" id="Q92G93"/>
<dbReference type="GeneID" id="928384"/>
<dbReference type="KEGG" id="rco:RC1230"/>
<dbReference type="PATRIC" id="fig|272944.4.peg.1410"/>
<dbReference type="HOGENOM" id="CLU_015134_0_1_5"/>
<dbReference type="Proteomes" id="UP000000816">
    <property type="component" value="Chromosome"/>
</dbReference>
<dbReference type="GO" id="GO:0005886">
    <property type="term" value="C:plasma membrane"/>
    <property type="evidence" value="ECO:0007669"/>
    <property type="project" value="UniProtKB-SubCell"/>
</dbReference>
<dbReference type="GO" id="GO:0003954">
    <property type="term" value="F:NADH dehydrogenase activity"/>
    <property type="evidence" value="ECO:0007669"/>
    <property type="project" value="TreeGrafter"/>
</dbReference>
<dbReference type="GO" id="GO:0016655">
    <property type="term" value="F:oxidoreductase activity, acting on NAD(P)H, quinone or similar compound as acceptor"/>
    <property type="evidence" value="ECO:0007669"/>
    <property type="project" value="UniProtKB-UniRule"/>
</dbReference>
<dbReference type="GO" id="GO:0048038">
    <property type="term" value="F:quinone binding"/>
    <property type="evidence" value="ECO:0007669"/>
    <property type="project" value="UniProtKB-KW"/>
</dbReference>
<dbReference type="GO" id="GO:0009060">
    <property type="term" value="P:aerobic respiration"/>
    <property type="evidence" value="ECO:0007669"/>
    <property type="project" value="TreeGrafter"/>
</dbReference>
<dbReference type="HAMAP" id="MF_01350">
    <property type="entry name" value="NDH1_NuoH"/>
    <property type="match status" value="1"/>
</dbReference>
<dbReference type="InterPro" id="IPR001694">
    <property type="entry name" value="NADH_UbQ_OxRdtase_su1/FPO"/>
</dbReference>
<dbReference type="InterPro" id="IPR018086">
    <property type="entry name" value="NADH_UbQ_OxRdtase_su1_CS"/>
</dbReference>
<dbReference type="NCBIfam" id="NF004741">
    <property type="entry name" value="PRK06076.1-2"/>
    <property type="match status" value="1"/>
</dbReference>
<dbReference type="NCBIfam" id="NF004745">
    <property type="entry name" value="PRK06076.1-6"/>
    <property type="match status" value="1"/>
</dbReference>
<dbReference type="PANTHER" id="PTHR11432">
    <property type="entry name" value="NADH DEHYDROGENASE SUBUNIT 1"/>
    <property type="match status" value="1"/>
</dbReference>
<dbReference type="PANTHER" id="PTHR11432:SF3">
    <property type="entry name" value="NADH-UBIQUINONE OXIDOREDUCTASE CHAIN 1"/>
    <property type="match status" value="1"/>
</dbReference>
<dbReference type="Pfam" id="PF00146">
    <property type="entry name" value="NADHdh"/>
    <property type="match status" value="1"/>
</dbReference>
<dbReference type="PROSITE" id="PS00667">
    <property type="entry name" value="COMPLEX1_ND1_1"/>
    <property type="match status" value="1"/>
</dbReference>
<dbReference type="PROSITE" id="PS00668">
    <property type="entry name" value="COMPLEX1_ND1_2"/>
    <property type="match status" value="1"/>
</dbReference>
<keyword id="KW-0997">Cell inner membrane</keyword>
<keyword id="KW-1003">Cell membrane</keyword>
<keyword id="KW-0472">Membrane</keyword>
<keyword id="KW-0520">NAD</keyword>
<keyword id="KW-0874">Quinone</keyword>
<keyword id="KW-1278">Translocase</keyword>
<keyword id="KW-0812">Transmembrane</keyword>
<keyword id="KW-1133">Transmembrane helix</keyword>
<keyword id="KW-0830">Ubiquinone</keyword>
<proteinExistence type="inferred from homology"/>